<reference key="1">
    <citation type="journal article" date="2001" name="Am. J. Hum. Genet.">
        <title>Mutations in a novel gene with transmembrane domains underlie Usher syndrome type 3.</title>
        <authorList>
            <person name="Joensuu T."/>
            <person name="Haemaelaeinen R."/>
            <person name="Yuan B."/>
            <person name="Johnson C."/>
            <person name="Tegelberg S."/>
            <person name="Gasparini P."/>
            <person name="Zelante L."/>
            <person name="Pirvola U."/>
            <person name="Pakarinen L."/>
            <person name="Lehesjoki A.-E."/>
            <person name="de la Chapelle A."/>
            <person name="Sankila E.-M."/>
        </authorList>
    </citation>
    <scope>NUCLEOTIDE SEQUENCE [MRNA] (ISOFORM 2)</scope>
    <scope>VARIANTS USH3A LYS-120 AND 153-ILE-LEU-154 DELINS MET</scope>
</reference>
<reference key="2">
    <citation type="journal article" date="2002" name="Am. J. Hum. Genet.">
        <title>Usher syndrome type III: revised genomic structure of the USH3 gene and identification of novel mutations.</title>
        <authorList>
            <person name="Fields R.R."/>
            <person name="Zhou G."/>
            <person name="Huang D."/>
            <person name="Davis J.R."/>
            <person name="Moeller C."/>
            <person name="Jacobson S.G."/>
            <person name="Kimberling W.J."/>
            <person name="Sumegi J."/>
        </authorList>
    </citation>
    <scope>NUCLEOTIDE SEQUENCE [MRNA] (ISOFORM 1)</scope>
    <scope>VARIANTS USH3A LYS-48 AND PRO-150</scope>
</reference>
<reference key="3">
    <citation type="journal article" date="2002" name="Eur. J. Hum. Genet.">
        <title>USH3A transcripts encode clarin-1, a four-transmembrane-domain protein with a possible role in sensory synapses.</title>
        <authorList>
            <person name="Adato A."/>
            <person name="Vreugde S."/>
            <person name="Joensuu T."/>
            <person name="Avidan N."/>
            <person name="Hamalainen R."/>
            <person name="Belenkiy O."/>
            <person name="Olender T."/>
            <person name="Bonne-Tamir B."/>
            <person name="Ben-Asher E."/>
            <person name="Espinos C."/>
            <person name="Millan J.M."/>
            <person name="Lehesjoki A.-E."/>
            <person name="Flannery J.G."/>
            <person name="Avraham K.B."/>
            <person name="Pietrokovski S."/>
            <person name="Sankila E.-M."/>
            <person name="Beckmann J.S."/>
            <person name="Lancet D."/>
        </authorList>
    </citation>
    <scope>NUCLEOTIDE SEQUENCE [MRNA] (ISOFORM 1)</scope>
    <scope>VARIANT USH3A LYS-48</scope>
    <scope>FUNCTION</scope>
    <source>
        <tissue>Retina</tissue>
    </source>
</reference>
<reference key="4">
    <citation type="journal article" date="2011" name="Eur. J. Hum. Genet.">
        <title>Alternative splice variants of the USH3A gene Clarin 1 (CLRN1).</title>
        <authorList>
            <person name="Vastinsalo H."/>
            <person name="Jalkanen R."/>
            <person name="Dinculescu A."/>
            <person name="Isosomppi J."/>
            <person name="Geller S."/>
            <person name="Flannery J.G."/>
            <person name="Hauswirth W.W."/>
            <person name="Sankila E.M."/>
        </authorList>
    </citation>
    <scope>NUCLEOTIDE SEQUENCE [MRNA] (ISOFORM 3)</scope>
    <scope>ALTERNATIVE SPLICING</scope>
    <source>
        <tissue>Retina</tissue>
    </source>
</reference>
<reference key="5">
    <citation type="journal article" date="2006" name="Nature">
        <title>The DNA sequence, annotation and analysis of human chromosome 3.</title>
        <authorList>
            <person name="Muzny D.M."/>
            <person name="Scherer S.E."/>
            <person name="Kaul R."/>
            <person name="Wang J."/>
            <person name="Yu J."/>
            <person name="Sudbrak R."/>
            <person name="Buhay C.J."/>
            <person name="Chen R."/>
            <person name="Cree A."/>
            <person name="Ding Y."/>
            <person name="Dugan-Rocha S."/>
            <person name="Gill R."/>
            <person name="Gunaratne P."/>
            <person name="Harris R.A."/>
            <person name="Hawes A.C."/>
            <person name="Hernandez J."/>
            <person name="Hodgson A.V."/>
            <person name="Hume J."/>
            <person name="Jackson A."/>
            <person name="Khan Z.M."/>
            <person name="Kovar-Smith C."/>
            <person name="Lewis L.R."/>
            <person name="Lozado R.J."/>
            <person name="Metzker M.L."/>
            <person name="Milosavljevic A."/>
            <person name="Miner G.R."/>
            <person name="Morgan M.B."/>
            <person name="Nazareth L.V."/>
            <person name="Scott G."/>
            <person name="Sodergren E."/>
            <person name="Song X.-Z."/>
            <person name="Steffen D."/>
            <person name="Wei S."/>
            <person name="Wheeler D.A."/>
            <person name="Wright M.W."/>
            <person name="Worley K.C."/>
            <person name="Yuan Y."/>
            <person name="Zhang Z."/>
            <person name="Adams C.Q."/>
            <person name="Ansari-Lari M.A."/>
            <person name="Ayele M."/>
            <person name="Brown M.J."/>
            <person name="Chen G."/>
            <person name="Chen Z."/>
            <person name="Clendenning J."/>
            <person name="Clerc-Blankenburg K.P."/>
            <person name="Chen R."/>
            <person name="Chen Z."/>
            <person name="Davis C."/>
            <person name="Delgado O."/>
            <person name="Dinh H.H."/>
            <person name="Dong W."/>
            <person name="Draper H."/>
            <person name="Ernst S."/>
            <person name="Fu G."/>
            <person name="Gonzalez-Garay M.L."/>
            <person name="Garcia D.K."/>
            <person name="Gillett W."/>
            <person name="Gu J."/>
            <person name="Hao B."/>
            <person name="Haugen E."/>
            <person name="Havlak P."/>
            <person name="He X."/>
            <person name="Hennig S."/>
            <person name="Hu S."/>
            <person name="Huang W."/>
            <person name="Jackson L.R."/>
            <person name="Jacob L.S."/>
            <person name="Kelly S.H."/>
            <person name="Kube M."/>
            <person name="Levy R."/>
            <person name="Li Z."/>
            <person name="Liu B."/>
            <person name="Liu J."/>
            <person name="Liu W."/>
            <person name="Lu J."/>
            <person name="Maheshwari M."/>
            <person name="Nguyen B.-V."/>
            <person name="Okwuonu G.O."/>
            <person name="Palmeiri A."/>
            <person name="Pasternak S."/>
            <person name="Perez L.M."/>
            <person name="Phelps K.A."/>
            <person name="Plopper F.J."/>
            <person name="Qiang B."/>
            <person name="Raymond C."/>
            <person name="Rodriguez R."/>
            <person name="Saenphimmachak C."/>
            <person name="Santibanez J."/>
            <person name="Shen H."/>
            <person name="Shen Y."/>
            <person name="Subramanian S."/>
            <person name="Tabor P.E."/>
            <person name="Verduzco D."/>
            <person name="Waldron L."/>
            <person name="Wang J."/>
            <person name="Wang J."/>
            <person name="Wang Q."/>
            <person name="Williams G.A."/>
            <person name="Wong G.K.-S."/>
            <person name="Yao Z."/>
            <person name="Zhang J."/>
            <person name="Zhang X."/>
            <person name="Zhao G."/>
            <person name="Zhou J."/>
            <person name="Zhou Y."/>
            <person name="Nelson D."/>
            <person name="Lehrach H."/>
            <person name="Reinhardt R."/>
            <person name="Naylor S.L."/>
            <person name="Yang H."/>
            <person name="Olson M."/>
            <person name="Weinstock G."/>
            <person name="Gibbs R.A."/>
        </authorList>
    </citation>
    <scope>NUCLEOTIDE SEQUENCE [LARGE SCALE GENOMIC DNA]</scope>
</reference>
<reference key="6">
    <citation type="submission" date="2005-09" db="EMBL/GenBank/DDBJ databases">
        <authorList>
            <person name="Mural R.J."/>
            <person name="Istrail S."/>
            <person name="Sutton G.G."/>
            <person name="Florea L."/>
            <person name="Halpern A.L."/>
            <person name="Mobarry C.M."/>
            <person name="Lippert R."/>
            <person name="Walenz B."/>
            <person name="Shatkay H."/>
            <person name="Dew I."/>
            <person name="Miller J.R."/>
            <person name="Flanigan M.J."/>
            <person name="Edwards N.J."/>
            <person name="Bolanos R."/>
            <person name="Fasulo D."/>
            <person name="Halldorsson B.V."/>
            <person name="Hannenhalli S."/>
            <person name="Turner R."/>
            <person name="Yooseph S."/>
            <person name="Lu F."/>
            <person name="Nusskern D.R."/>
            <person name="Shue B.C."/>
            <person name="Zheng X.H."/>
            <person name="Zhong F."/>
            <person name="Delcher A.L."/>
            <person name="Huson D.H."/>
            <person name="Kravitz S.A."/>
            <person name="Mouchard L."/>
            <person name="Reinert K."/>
            <person name="Remington K.A."/>
            <person name="Clark A.G."/>
            <person name="Waterman M.S."/>
            <person name="Eichler E.E."/>
            <person name="Adams M.D."/>
            <person name="Hunkapiller M.W."/>
            <person name="Myers E.W."/>
            <person name="Venter J.C."/>
        </authorList>
    </citation>
    <scope>NUCLEOTIDE SEQUENCE [LARGE SCALE GENOMIC DNA]</scope>
</reference>
<reference key="7">
    <citation type="journal article" date="2004" name="Genome Res.">
        <title>The status, quality, and expansion of the NIH full-length cDNA project: the Mammalian Gene Collection (MGC).</title>
        <authorList>
            <consortium name="The MGC Project Team"/>
        </authorList>
    </citation>
    <scope>NUCLEOTIDE SEQUENCE [LARGE SCALE MRNA] (ISOFORM 1)</scope>
</reference>
<reference key="8">
    <citation type="journal article" date="2004" name="Clin. Genet.">
        <title>Mutation screening of USH3 gene (clarin-1) in Spanish patients with Usher syndrome: low prevalence and phenotypic variability.</title>
        <authorList>
            <person name="Aller E."/>
            <person name="Jaijo T."/>
            <person name="Oltra S."/>
            <person name="Alio J."/>
            <person name="Galan F."/>
            <person name="Najera C."/>
            <person name="Beneyto M."/>
            <person name="Millan J.M."/>
        </authorList>
    </citation>
    <scope>VARIANT USH3A GLY-40</scope>
</reference>
<reference key="9">
    <citation type="journal article" date="2008" name="Hum. Mutat.">
        <title>Spectrum of USH2A mutations in Scandinavian patients with Usher syndrome type II.</title>
        <authorList>
            <person name="Dreyer B."/>
            <person name="Brox V."/>
            <person name="Tranebjaerg L."/>
            <person name="Rosenberg T."/>
            <person name="Sadeghi A.M."/>
            <person name="Moeller C."/>
            <person name="Nilssen O."/>
        </authorList>
    </citation>
    <scope>VARIANT USH3A PRO-105</scope>
</reference>
<reference key="10">
    <citation type="journal article" date="2011" name="Ophthalmology">
        <title>CLRN1 mutations cause nonsyndromic retinitis pigmentosa.</title>
        <authorList>
            <person name="Khan M.I."/>
            <person name="Kersten F.F."/>
            <person name="Azam M."/>
            <person name="Collin R.W."/>
            <person name="Hussain A."/>
            <person name="Shah S.T."/>
            <person name="Keunen J.E."/>
            <person name="Kremer H."/>
            <person name="Cremers F.P."/>
            <person name="Qamar R."/>
            <person name="den Hollander A.I."/>
        </authorList>
    </citation>
    <scope>VARIANTS RP61 LEU-31 AND TRP-154</scope>
    <scope>CHARACTERIZATION OF VARIANTS RP61 LEU-31 AND TRP-154</scope>
    <scope>SUBCELLULAR LOCATION</scope>
</reference>
<reference key="11">
    <citation type="journal article" date="2012" name="Mol. Vis.">
        <title>Two novel disease-causing mutations in the CLRN1 gene in patients with Usher syndrome type 3.</title>
        <authorList>
            <person name="Garcia-Garcia G."/>
            <person name="Aparisi M.J."/>
            <person name="Rodrigo R."/>
            <person name="Sequedo M.D."/>
            <person name="Espinos C."/>
            <person name="Rosell J."/>
            <person name="Olea J.L."/>
            <person name="Mendivil M.P."/>
            <person name="Ramos-Arroyo M.A."/>
            <person name="Ayuso C."/>
            <person name="Jaijo T."/>
            <person name="Aller E."/>
            <person name="Millan J.M."/>
        </authorList>
    </citation>
    <scope>VARIANT USH3A ASN-168</scope>
</reference>
<protein>
    <recommendedName>
        <fullName>Clarin-1</fullName>
    </recommendedName>
    <alternativeName>
        <fullName>Usher syndrome type-3 protein</fullName>
    </alternativeName>
</protein>
<evidence type="ECO:0000255" key="1"/>
<evidence type="ECO:0000269" key="2">
    <source>
    </source>
</evidence>
<evidence type="ECO:0000269" key="3">
    <source>
    </source>
</evidence>
<evidence type="ECO:0000269" key="4">
    <source>
    </source>
</evidence>
<evidence type="ECO:0000269" key="5">
    <source>
    </source>
</evidence>
<evidence type="ECO:0000269" key="6">
    <source>
    </source>
</evidence>
<evidence type="ECO:0000269" key="7">
    <source>
    </source>
</evidence>
<evidence type="ECO:0000269" key="8">
    <source>
    </source>
</evidence>
<evidence type="ECO:0000303" key="9">
    <source>
    </source>
</evidence>
<evidence type="ECO:0000303" key="10">
    <source>
    </source>
</evidence>
<evidence type="ECO:0000305" key="11"/>
<proteinExistence type="evidence at protein level"/>
<dbReference type="EMBL" id="AF388366">
    <property type="protein sequence ID" value="AAL09581.1"/>
    <property type="molecule type" value="mRNA"/>
</dbReference>
<dbReference type="EMBL" id="AF482697">
    <property type="protein sequence ID" value="AAN07148.1"/>
    <property type="molecule type" value="mRNA"/>
</dbReference>
<dbReference type="EMBL" id="AF495717">
    <property type="protein sequence ID" value="AAM88774.1"/>
    <property type="molecule type" value="mRNA"/>
</dbReference>
<dbReference type="EMBL" id="HM626132">
    <property type="protein sequence ID" value="ADM63096.1"/>
    <property type="molecule type" value="mRNA"/>
</dbReference>
<dbReference type="EMBL" id="AC020636">
    <property type="status" value="NOT_ANNOTATED_CDS"/>
    <property type="molecule type" value="Genomic_DNA"/>
</dbReference>
<dbReference type="EMBL" id="CH471052">
    <property type="protein sequence ID" value="EAW78814.1"/>
    <property type="molecule type" value="Genomic_DNA"/>
</dbReference>
<dbReference type="EMBL" id="CH471052">
    <property type="protein sequence ID" value="EAW78815.1"/>
    <property type="molecule type" value="Genomic_DNA"/>
</dbReference>
<dbReference type="EMBL" id="BC074970">
    <property type="protein sequence ID" value="AAH74970.1"/>
    <property type="molecule type" value="mRNA"/>
</dbReference>
<dbReference type="EMBL" id="BC074971">
    <property type="protein sequence ID" value="AAH74971.1"/>
    <property type="molecule type" value="mRNA"/>
</dbReference>
<dbReference type="CCDS" id="CCDS3153.1">
    <molecule id="P58418-3"/>
</dbReference>
<dbReference type="CCDS" id="CCDS35492.1">
    <molecule id="P58418-1"/>
</dbReference>
<dbReference type="CCDS" id="CCDS56285.1">
    <molecule id="P58418-4"/>
</dbReference>
<dbReference type="RefSeq" id="NP_001182723.1">
    <molecule id="P58418-4"/>
    <property type="nucleotide sequence ID" value="NM_001195794.1"/>
</dbReference>
<dbReference type="RefSeq" id="NP_443721.1">
    <molecule id="P58418-1"/>
    <property type="nucleotide sequence ID" value="NM_052995.2"/>
</dbReference>
<dbReference type="RefSeq" id="NP_777367.1">
    <molecule id="P58418-3"/>
    <property type="nucleotide sequence ID" value="NM_174878.3"/>
</dbReference>
<dbReference type="BioGRID" id="113244">
    <property type="interactions" value="30"/>
</dbReference>
<dbReference type="FunCoup" id="P58418">
    <property type="interactions" value="19"/>
</dbReference>
<dbReference type="IntAct" id="P58418">
    <property type="interactions" value="26"/>
</dbReference>
<dbReference type="STRING" id="9606.ENSP00000329158"/>
<dbReference type="TCDB" id="9.A.46.1.1">
    <property type="family name" value="the clarin (clrn) family"/>
</dbReference>
<dbReference type="GlyCosmos" id="P58418">
    <property type="glycosylation" value="1 site, No reported glycans"/>
</dbReference>
<dbReference type="GlyGen" id="P58418">
    <property type="glycosylation" value="1 site"/>
</dbReference>
<dbReference type="iPTMnet" id="P58418"/>
<dbReference type="PhosphoSitePlus" id="P58418"/>
<dbReference type="BioMuta" id="CLRN1"/>
<dbReference type="DMDM" id="125987806"/>
<dbReference type="PaxDb" id="9606-ENSP00000329158"/>
<dbReference type="ProteomicsDB" id="57075">
    <molecule id="P58418-1"/>
</dbReference>
<dbReference type="Antibodypedia" id="52945">
    <property type="antibodies" value="32 antibodies from 11 providers"/>
</dbReference>
<dbReference type="DNASU" id="7401"/>
<dbReference type="Ensembl" id="ENST00000295911.6">
    <molecule id="P58418-1"/>
    <property type="protein sequence ID" value="ENSP00000295911.2"/>
    <property type="gene ID" value="ENSG00000163646.12"/>
</dbReference>
<dbReference type="Ensembl" id="ENST00000327047.6">
    <molecule id="P58418-3"/>
    <property type="protein sequence ID" value="ENSP00000322280.1"/>
    <property type="gene ID" value="ENSG00000163646.12"/>
</dbReference>
<dbReference type="Ensembl" id="ENST00000328863.8">
    <molecule id="P58418-4"/>
    <property type="protein sequence ID" value="ENSP00000329158.4"/>
    <property type="gene ID" value="ENSG00000163646.12"/>
</dbReference>
<dbReference type="GeneID" id="7401"/>
<dbReference type="KEGG" id="hsa:7401"/>
<dbReference type="MANE-Select" id="ENST00000327047.6">
    <property type="protein sequence ID" value="ENSP00000322280.1"/>
    <property type="RefSeq nucleotide sequence ID" value="NM_174878.3"/>
    <property type="RefSeq protein sequence ID" value="NP_777367.1"/>
</dbReference>
<dbReference type="UCSC" id="uc003eyj.3">
    <molecule id="P58418-3"/>
    <property type="organism name" value="human"/>
</dbReference>
<dbReference type="AGR" id="HGNC:12605"/>
<dbReference type="CTD" id="7401"/>
<dbReference type="DisGeNET" id="7401"/>
<dbReference type="GeneCards" id="CLRN1"/>
<dbReference type="GeneReviews" id="CLRN1"/>
<dbReference type="HGNC" id="HGNC:12605">
    <property type="gene designation" value="CLRN1"/>
</dbReference>
<dbReference type="HPA" id="ENSG00000163646">
    <property type="expression patterns" value="Group enriched (adrenal gland, retina)"/>
</dbReference>
<dbReference type="MalaCards" id="CLRN1"/>
<dbReference type="MIM" id="276902">
    <property type="type" value="phenotype"/>
</dbReference>
<dbReference type="MIM" id="606397">
    <property type="type" value="gene"/>
</dbReference>
<dbReference type="MIM" id="614180">
    <property type="type" value="phenotype"/>
</dbReference>
<dbReference type="neXtProt" id="NX_P58418"/>
<dbReference type="OpenTargets" id="ENSG00000163646"/>
<dbReference type="Orphanet" id="791">
    <property type="disease" value="Retinitis pigmentosa"/>
</dbReference>
<dbReference type="Orphanet" id="231183">
    <property type="disease" value="Usher syndrome type 3"/>
</dbReference>
<dbReference type="PharmGKB" id="PA37231"/>
<dbReference type="VEuPathDB" id="HostDB:ENSG00000163646"/>
<dbReference type="eggNOG" id="ENOG502QQVB">
    <property type="taxonomic scope" value="Eukaryota"/>
</dbReference>
<dbReference type="GeneTree" id="ENSGT00850000132319"/>
<dbReference type="HOGENOM" id="CLU_095723_0_0_1"/>
<dbReference type="InParanoid" id="P58418"/>
<dbReference type="OMA" id="IIFCTAG"/>
<dbReference type="OrthoDB" id="10012538at2759"/>
<dbReference type="PAN-GO" id="P58418">
    <property type="GO annotations" value="2 GO annotations based on evolutionary models"/>
</dbReference>
<dbReference type="PhylomeDB" id="P58418"/>
<dbReference type="TreeFam" id="TF331875"/>
<dbReference type="PathwayCommons" id="P58418"/>
<dbReference type="SignaLink" id="P58418"/>
<dbReference type="BioGRID-ORCS" id="7401">
    <property type="hits" value="11 hits in 1142 CRISPR screens"/>
</dbReference>
<dbReference type="ChiTaRS" id="CLRN1">
    <property type="organism name" value="human"/>
</dbReference>
<dbReference type="GeneWiki" id="CLRN1"/>
<dbReference type="GenomeRNAi" id="7401"/>
<dbReference type="Pharos" id="P58418">
    <property type="development level" value="Tbio"/>
</dbReference>
<dbReference type="PRO" id="PR:P58418"/>
<dbReference type="Proteomes" id="UP000005640">
    <property type="component" value="Chromosome 3"/>
</dbReference>
<dbReference type="RNAct" id="P58418">
    <property type="molecule type" value="protein"/>
</dbReference>
<dbReference type="Bgee" id="ENSG00000163646">
    <property type="expression patterns" value="Expressed in adrenal tissue and 45 other cell types or tissues"/>
</dbReference>
<dbReference type="ExpressionAtlas" id="P58418">
    <property type="expression patterns" value="baseline and differential"/>
</dbReference>
<dbReference type="GO" id="GO:0045178">
    <property type="term" value="C:basal part of cell"/>
    <property type="evidence" value="ECO:0007669"/>
    <property type="project" value="Ensembl"/>
</dbReference>
<dbReference type="GO" id="GO:0030027">
    <property type="term" value="C:lamellipodium"/>
    <property type="evidence" value="ECO:0000314"/>
    <property type="project" value="MGI"/>
</dbReference>
<dbReference type="GO" id="GO:0015630">
    <property type="term" value="C:microtubule cytoskeleton"/>
    <property type="evidence" value="ECO:0007669"/>
    <property type="project" value="Ensembl"/>
</dbReference>
<dbReference type="GO" id="GO:0005902">
    <property type="term" value="C:microvillus"/>
    <property type="evidence" value="ECO:0000314"/>
    <property type="project" value="MGI"/>
</dbReference>
<dbReference type="GO" id="GO:0005886">
    <property type="term" value="C:plasma membrane"/>
    <property type="evidence" value="ECO:0000314"/>
    <property type="project" value="MGI"/>
</dbReference>
<dbReference type="GO" id="GO:0032420">
    <property type="term" value="C:stereocilium"/>
    <property type="evidence" value="ECO:0007669"/>
    <property type="project" value="Ensembl"/>
</dbReference>
<dbReference type="GO" id="GO:0030140">
    <property type="term" value="C:trans-Golgi network transport vesicle"/>
    <property type="evidence" value="ECO:0007669"/>
    <property type="project" value="Ensembl"/>
</dbReference>
<dbReference type="GO" id="GO:0007015">
    <property type="term" value="P:actin filament organization"/>
    <property type="evidence" value="ECO:0000314"/>
    <property type="project" value="MGI"/>
</dbReference>
<dbReference type="GO" id="GO:0060088">
    <property type="term" value="P:auditory receptor cell stereocilium organization"/>
    <property type="evidence" value="ECO:0007669"/>
    <property type="project" value="Ensembl"/>
</dbReference>
<dbReference type="GO" id="GO:0048870">
    <property type="term" value="P:cell motility"/>
    <property type="evidence" value="ECO:0000314"/>
    <property type="project" value="MGI"/>
</dbReference>
<dbReference type="GO" id="GO:0050957">
    <property type="term" value="P:equilibrioception"/>
    <property type="evidence" value="ECO:0000315"/>
    <property type="project" value="HGNC-UCL"/>
</dbReference>
<dbReference type="GO" id="GO:0045494">
    <property type="term" value="P:photoreceptor cell maintenance"/>
    <property type="evidence" value="ECO:0000315"/>
    <property type="project" value="HGNC-UCL"/>
</dbReference>
<dbReference type="GO" id="GO:0010592">
    <property type="term" value="P:positive regulation of lamellipodium assembly"/>
    <property type="evidence" value="ECO:0000314"/>
    <property type="project" value="MGI"/>
</dbReference>
<dbReference type="GO" id="GO:0050953">
    <property type="term" value="P:sensory perception of light stimulus"/>
    <property type="evidence" value="ECO:0000315"/>
    <property type="project" value="HGNC-UCL"/>
</dbReference>
<dbReference type="GO" id="GO:0007605">
    <property type="term" value="P:sensory perception of sound"/>
    <property type="evidence" value="ECO:0000315"/>
    <property type="project" value="HGNC-UCL"/>
</dbReference>
<dbReference type="GO" id="GO:0007601">
    <property type="term" value="P:visual perception"/>
    <property type="evidence" value="ECO:0007669"/>
    <property type="project" value="UniProtKB-KW"/>
</dbReference>
<dbReference type="FunFam" id="1.20.140.150:FF:000045">
    <property type="entry name" value="Clarin 1"/>
    <property type="match status" value="1"/>
</dbReference>
<dbReference type="InterPro" id="IPR026748">
    <property type="entry name" value="Clarin"/>
</dbReference>
<dbReference type="PANTHER" id="PTHR31548">
    <property type="entry name" value="CLARIN"/>
    <property type="match status" value="1"/>
</dbReference>
<dbReference type="PANTHER" id="PTHR31548:SF4">
    <property type="entry name" value="CLARIN-1"/>
    <property type="match status" value="1"/>
</dbReference>
<sequence length="232" mass="25719">MPSQQKKIIFCMAGVFSFACALGVVTALGTPLWIKATVLCKTGALLVNASGQELDKFMGEMQYGLFHGEGVRQCGLGARPFRFSFFPDLLKAIPVSIHVNVILFSAILIVLTMVGTAFFMYNAFGKPFETLHGPLGLYLLSFISGSCGCLVMILFASEVKIHHLSEKIANYKEGTYVYKTQSEKYTTSFWVIFFCFFVHFLNGLLIRLAGFQFPFAKSKDAETTNVAADLMY</sequence>
<comment type="function">
    <text evidence="3">May have a role in the excitatory ribbon synapse junctions between hair cells and cochlear ganglion cells and presumably also in analogous synapses within the retina.</text>
</comment>
<comment type="interaction">
    <interactant intactId="EBI-17274839">
        <id>P58418</id>
    </interactant>
    <interactant intactId="EBI-3921603">
        <id>Q9BVK2</id>
        <label>ALG8</label>
    </interactant>
    <organismsDiffer>false</organismsDiffer>
    <experiments>3</experiments>
</comment>
<comment type="interaction">
    <interactant intactId="EBI-17274839">
        <id>P58418</id>
    </interactant>
    <interactant intactId="EBI-12244618">
        <id>Q6PL45-2</id>
        <label>BRICD5</label>
    </interactant>
    <organismsDiffer>false</organismsDiffer>
    <experiments>3</experiments>
</comment>
<comment type="interaction">
    <interactant intactId="EBI-17274839">
        <id>P58418</id>
    </interactant>
    <interactant intactId="EBI-12822627">
        <id>O14523</id>
        <label>C2CD2L</label>
    </interactant>
    <organismsDiffer>false</organismsDiffer>
    <experiments>3</experiments>
</comment>
<comment type="interaction">
    <interactant intactId="EBI-17274839">
        <id>P58418</id>
    </interactant>
    <interactant intactId="EBI-16770554">
        <id>Q8WVQ1</id>
        <label>CANT1</label>
    </interactant>
    <organismsDiffer>false</organismsDiffer>
    <experiments>3</experiments>
</comment>
<comment type="interaction">
    <interactant intactId="EBI-17274839">
        <id>P58418</id>
    </interactant>
    <interactant intactId="EBI-10271156">
        <id>Q8NHW4</id>
        <label>CCL4L2</label>
    </interactant>
    <organismsDiffer>false</organismsDiffer>
    <experiments>3</experiments>
</comment>
<comment type="interaction">
    <interactant intactId="EBI-17274839">
        <id>P58418</id>
    </interactant>
    <interactant intactId="EBI-12256978">
        <id>Q8N6F1-2</id>
        <label>CLDN19</label>
    </interactant>
    <organismsDiffer>false</organismsDiffer>
    <experiments>3</experiments>
</comment>
<comment type="interaction">
    <interactant intactId="EBI-17274839">
        <id>P58418</id>
    </interactant>
    <interactant intactId="EBI-12019274">
        <id>Q4LDR2</id>
        <label>CTXN3</label>
    </interactant>
    <organismsDiffer>false</organismsDiffer>
    <experiments>3</experiments>
</comment>
<comment type="interaction">
    <interactant intactId="EBI-17274839">
        <id>P58418</id>
    </interactant>
    <interactant intactId="EBI-10305400">
        <id>Q8N682</id>
        <label>DRAM1</label>
    </interactant>
    <organismsDiffer>false</organismsDiffer>
    <experiments>3</experiments>
</comment>
<comment type="interaction">
    <interactant intactId="EBI-17274839">
        <id>P58418</id>
    </interactant>
    <interactant intactId="EBI-13383724">
        <id>Q8N5W8</id>
        <label>FAM24B</label>
    </interactant>
    <organismsDiffer>false</organismsDiffer>
    <experiments>3</experiments>
</comment>
<comment type="interaction">
    <interactant intactId="EBI-17274839">
        <id>P58418</id>
    </interactant>
    <interactant intactId="EBI-3922408">
        <id>Q9Y231</id>
        <label>FUT9</label>
    </interactant>
    <organismsDiffer>false</organismsDiffer>
    <experiments>3</experiments>
</comment>
<comment type="interaction">
    <interactant intactId="EBI-17274839">
        <id>P58418</id>
    </interactant>
    <interactant intactId="EBI-2568251">
        <id>P11215</id>
        <label>ITGAM</label>
    </interactant>
    <organismsDiffer>false</organismsDiffer>
    <experiments>3</experiments>
</comment>
<comment type="interaction">
    <interactant intactId="EBI-17274839">
        <id>P58418</id>
    </interactant>
    <interactant intactId="EBI-3920969">
        <id>Q6N075</id>
        <label>MFSD5</label>
    </interactant>
    <organismsDiffer>false</organismsDiffer>
    <experiments>3</experiments>
</comment>
<comment type="interaction">
    <interactant intactId="EBI-17274839">
        <id>P58418</id>
    </interactant>
    <interactant intactId="EBI-724754">
        <id>O14880</id>
        <label>MGST3</label>
    </interactant>
    <organismsDiffer>false</organismsDiffer>
    <experiments>3</experiments>
</comment>
<comment type="interaction">
    <interactant intactId="EBI-17274839">
        <id>P58418</id>
    </interactant>
    <interactant intactId="EBI-10262547">
        <id>Q8IXM6</id>
        <label>NRM</label>
    </interactant>
    <organismsDiffer>false</organismsDiffer>
    <experiments>3</experiments>
</comment>
<comment type="interaction">
    <interactant intactId="EBI-17274839">
        <id>P58418</id>
    </interactant>
    <interactant intactId="EBI-1058865">
        <id>O75396</id>
        <label>SEC22B</label>
    </interactant>
    <organismsDiffer>false</organismsDiffer>
    <experiments>3</experiments>
</comment>
<comment type="interaction">
    <interactant intactId="EBI-17274839">
        <id>P58418</id>
    </interactant>
    <interactant intactId="EBI-17769653">
        <id>Q8N130</id>
        <label>SLC34A3</label>
    </interactant>
    <organismsDiffer>false</organismsDiffer>
    <experiments>3</experiments>
</comment>
<comment type="interaction">
    <interactant intactId="EBI-17274839">
        <id>P58418</id>
    </interactant>
    <interactant intactId="EBI-2844246">
        <id>Q9NV12</id>
        <label>TMEM140</label>
    </interactant>
    <organismsDiffer>false</organismsDiffer>
    <experiments>3</experiments>
</comment>
<comment type="interaction">
    <interactant intactId="EBI-17274839">
        <id>P58418</id>
    </interactant>
    <interactant intactId="EBI-348587">
        <id>Q9BVK8</id>
        <label>TMEM147</label>
    </interactant>
    <organismsDiffer>false</organismsDiffer>
    <experiments>3</experiments>
</comment>
<comment type="interaction">
    <interactant intactId="EBI-17274839">
        <id>P58418</id>
    </interactant>
    <interactant intactId="EBI-347385">
        <id>Q9H0R3</id>
        <label>TMEM222</label>
    </interactant>
    <organismsDiffer>false</organismsDiffer>
    <experiments>3</experiments>
</comment>
<comment type="interaction">
    <interactant intactId="EBI-17274839">
        <id>P58418</id>
    </interactant>
    <interactant intactId="EBI-11528917">
        <id>Q8WW34-2</id>
        <label>TMEM239</label>
    </interactant>
    <organismsDiffer>false</organismsDiffer>
    <experiments>3</experiments>
</comment>
<comment type="interaction">
    <interactant intactId="EBI-17274839">
        <id>P58418</id>
    </interactant>
    <interactant intactId="EBI-12366453">
        <id>P56557</id>
        <label>TMEM50B</label>
    </interactant>
    <organismsDiffer>false</organismsDiffer>
    <experiments>3</experiments>
</comment>
<comment type="interaction">
    <interactant intactId="EBI-17274839">
        <id>P58418</id>
    </interactant>
    <interactant intactId="EBI-2548832">
        <id>Q8N661</id>
        <label>TMEM86B</label>
    </interactant>
    <organismsDiffer>false</organismsDiffer>
    <experiments>3</experiments>
</comment>
<comment type="interaction">
    <interactant intactId="EBI-17274839">
        <id>P58418</id>
    </interactant>
    <interactant intactId="EBI-11724433">
        <id>Q6ZT21</id>
        <label>TMPPE</label>
    </interactant>
    <organismsDiffer>false</organismsDiffer>
    <experiments>3</experiments>
</comment>
<comment type="interaction">
    <interactant intactId="EBI-17274839">
        <id>P58418</id>
    </interactant>
    <interactant intactId="EBI-10313040">
        <id>Q9NRS4</id>
        <label>TMPRSS4</label>
    </interactant>
    <organismsDiffer>false</organismsDiffer>
    <experiments>3</experiments>
</comment>
<comment type="interaction">
    <interactant intactId="EBI-17274839">
        <id>P58418</id>
    </interactant>
    <interactant intactId="EBI-7601760">
        <id>Q53HI1</id>
        <label>UNC50</label>
    </interactant>
    <organismsDiffer>false</organismsDiffer>
    <experiments>3</experiments>
</comment>
<comment type="interaction">
    <interactant intactId="EBI-17274839">
        <id>P58418</id>
    </interactant>
    <interactant intactId="EBI-12837904">
        <id>Q96MV8</id>
        <label>ZDHHC15</label>
    </interactant>
    <organismsDiffer>false</organismsDiffer>
    <experiments>3</experiments>
</comment>
<comment type="subcellular location">
    <subcellularLocation>
        <location evidence="7">Cell membrane</location>
        <topology evidence="1">Multi-pass membrane protein</topology>
    </subcellularLocation>
</comment>
<comment type="alternative products">
    <event type="alternative splicing"/>
    <isoform>
        <id>P58418-3</id>
        <name>1</name>
        <sequence type="displayed"/>
    </isoform>
    <isoform>
        <id>P58418-1</id>
        <name>2</name>
        <name>A</name>
        <sequence type="described" ref="VSP_022868 VSP_022869"/>
    </isoform>
    <isoform>
        <id>P58418-4</id>
        <name>3</name>
        <name>0-2-2b-3</name>
        <sequence type="described" ref="VSP_043303"/>
    </isoform>
    <text>Additional isoforms seem to exist.</text>
</comment>
<comment type="tissue specificity">
    <text>Widely expressed. Found in the retina.</text>
</comment>
<comment type="disease" evidence="2 3 4 5 6 8">
    <disease id="DI-01120">
        <name>Usher syndrome 3A</name>
        <acronym>USH3A</acronym>
        <description>USH is a genetically heterogeneous condition characterized by the association of retinitis pigmentosa with sensorineural deafness. Age at onset and differences in auditory and vestibular function distinguish Usher syndrome type 1 (USH1), Usher syndrome type 2 (USH2) and Usher syndrome type 3 (USH3). USH3 is characterized by postlingual, progressive hearing loss, variable vestibular dysfunction, and onset of retinitis pigmentosa symptoms, including nyctalopia, constriction of the visual fields, and loss of central visual acuity, usually by the second decade of life.</description>
        <dbReference type="MIM" id="276902"/>
    </disease>
    <text>The disease is caused by variants affecting the gene represented in this entry.</text>
</comment>
<comment type="disease" evidence="7">
    <disease id="DI-03234">
        <name>Retinitis pigmentosa 61</name>
        <acronym>RP61</acronym>
        <description>A retinal dystrophy belonging to the group of pigmentary retinopathies. Retinitis pigmentosa is characterized by retinal pigment deposits visible on fundus examination and primary loss of rod photoreceptor cells followed by secondary loss of cone photoreceptors. Patients typically have night vision blindness and loss of midperipheral visual field. As their condition progresses, they lose their far peripheral visual field and eventually central vision as well.</description>
        <dbReference type="MIM" id="614180"/>
    </disease>
    <text>The disease is caused by variants affecting the gene represented in this entry.</text>
</comment>
<comment type="similarity">
    <text evidence="11">Belongs to the clarin family.</text>
</comment>
<accession>P58418</accession>
<accession>D3DNJ3</accession>
<accession>E1ACU9</accession>
<accession>Q8N6A9</accession>
<feature type="chain" id="PRO_0000065729" description="Clarin-1">
    <location>
        <begin position="1"/>
        <end position="232"/>
    </location>
</feature>
<feature type="transmembrane region" description="Helical" evidence="1">
    <location>
        <begin position="8"/>
        <end position="28"/>
    </location>
</feature>
<feature type="transmembrane region" description="Helical" evidence="1">
    <location>
        <begin position="101"/>
        <end position="121"/>
    </location>
</feature>
<feature type="transmembrane region" description="Helical" evidence="1">
    <location>
        <begin position="135"/>
        <end position="155"/>
    </location>
</feature>
<feature type="transmembrane region" description="Helical" evidence="1">
    <location>
        <begin position="186"/>
        <end position="206"/>
    </location>
</feature>
<feature type="glycosylation site" description="N-linked (GlcNAc...) asparagine" evidence="1">
    <location>
        <position position="48"/>
    </location>
</feature>
<feature type="splice variant" id="VSP_022868" description="In isoform 2." evidence="9">
    <original>MPSQQKKIIFCMAGVFSFACALGVVTALGTPLWIKATVLCKTGALLVNASGQELDKFMGEMQYGLFHGEGVRQCGLGARPFRFSF</original>
    <variation>MQALQQQPV</variation>
    <location>
        <begin position="1"/>
        <end position="85"/>
    </location>
</feature>
<feature type="splice variant" id="VSP_043303" description="In isoform 3." evidence="10">
    <original>S</original>
    <variation>SVALWLPATRHQAQ</variation>
    <location>
        <position position="144"/>
    </location>
</feature>
<feature type="splice variant" id="VSP_022869" description="In isoform 2." evidence="9">
    <original>VIFFCFFVHFLNGLLIRLAGFQFPFAKSKDAETTNVAADLMY</original>
    <variation>LTKGHS</variation>
    <location>
        <begin position="191"/>
        <end position="232"/>
    </location>
</feature>
<feature type="sequence variant" id="VAR_053825" description="In dbSNP:rs3796241.">
    <original>K</original>
    <variation>I</variation>
    <location>
        <position position="7"/>
    </location>
</feature>
<feature type="sequence variant" id="VAR_066673" description="In RP61; the mutant protein is retained in the endoplasmic reticulum; dbSNP:rs374390376." evidence="7">
    <original>P</original>
    <variation>L</variation>
    <location>
        <position position="31"/>
    </location>
</feature>
<feature type="sequence variant" id="VAR_054555" description="In USH3A; dbSNP:rs121908143." evidence="5">
    <original>C</original>
    <variation>G</variation>
    <location>
        <position position="40"/>
    </location>
</feature>
<feature type="sequence variant" id="VAR_030345" description="In USH3A; dbSNP:rs111033258." evidence="3 4">
    <original>N</original>
    <variation>K</variation>
    <location>
        <position position="48"/>
    </location>
</feature>
<feature type="sequence variant" id="VAR_054556" description="In USH3A." evidence="6">
    <original>S</original>
    <variation>P</variation>
    <location>
        <position position="105"/>
    </location>
</feature>
<feature type="sequence variant" id="VAR_012241" description="In USH3A; dbSNP:rs121908141." evidence="2">
    <original>M</original>
    <variation>K</variation>
    <location>
        <position position="120"/>
    </location>
</feature>
<feature type="sequence variant" id="VAR_030346" description="In USH3A; dbSNP:rs121908142." evidence="4">
    <original>L</original>
    <variation>P</variation>
    <location>
        <position position="150"/>
    </location>
</feature>
<feature type="sequence variant" id="VAR_012242" description="In USH3A." evidence="2">
    <original>IL</original>
    <variation>M</variation>
    <location>
        <begin position="153"/>
        <end position="154"/>
    </location>
</feature>
<feature type="sequence variant" id="VAR_066674" description="In RP61; the mutant protein is retained in the endoplasmic reticulum; dbSNP:rs775098953." evidence="7">
    <original>L</original>
    <variation>W</variation>
    <location>
        <position position="154"/>
    </location>
</feature>
<feature type="sequence variant" id="VAR_071434" description="In USH3A." evidence="8">
    <original>I</original>
    <variation>N</variation>
    <location>
        <position position="168"/>
    </location>
</feature>
<organism>
    <name type="scientific">Homo sapiens</name>
    <name type="common">Human</name>
    <dbReference type="NCBI Taxonomy" id="9606"/>
    <lineage>
        <taxon>Eukaryota</taxon>
        <taxon>Metazoa</taxon>
        <taxon>Chordata</taxon>
        <taxon>Craniata</taxon>
        <taxon>Vertebrata</taxon>
        <taxon>Euteleostomi</taxon>
        <taxon>Mammalia</taxon>
        <taxon>Eutheria</taxon>
        <taxon>Euarchontoglires</taxon>
        <taxon>Primates</taxon>
        <taxon>Haplorrhini</taxon>
        <taxon>Catarrhini</taxon>
        <taxon>Hominidae</taxon>
        <taxon>Homo</taxon>
    </lineage>
</organism>
<keyword id="KW-0025">Alternative splicing</keyword>
<keyword id="KW-1003">Cell membrane</keyword>
<keyword id="KW-0209">Deafness</keyword>
<keyword id="KW-0225">Disease variant</keyword>
<keyword id="KW-0325">Glycoprotein</keyword>
<keyword id="KW-1009">Hearing</keyword>
<keyword id="KW-0472">Membrane</keyword>
<keyword id="KW-1185">Reference proteome</keyword>
<keyword id="KW-0682">Retinitis pigmentosa</keyword>
<keyword id="KW-0716">Sensory transduction</keyword>
<keyword id="KW-0812">Transmembrane</keyword>
<keyword id="KW-1133">Transmembrane helix</keyword>
<keyword id="KW-0836">Usher syndrome</keyword>
<keyword id="KW-0844">Vision</keyword>
<name>CLRN1_HUMAN</name>
<gene>
    <name type="primary">CLRN1</name>
    <name type="synonym">USH3A</name>
</gene>